<accession>P0CT42</accession>
<accession>Q9C0R2</accession>
<accession>Q9C119</accession>
<proteinExistence type="inferred from homology"/>
<keyword id="KW-0064">Aspartyl protease</keyword>
<keyword id="KW-0229">DNA integration</keyword>
<keyword id="KW-0233">DNA recombination</keyword>
<keyword id="KW-0238">DNA-binding</keyword>
<keyword id="KW-0239">DNA-directed DNA polymerase</keyword>
<keyword id="KW-0255">Endonuclease</keyword>
<keyword id="KW-0378">Hydrolase</keyword>
<keyword id="KW-0460">Magnesium</keyword>
<keyword id="KW-0479">Metal-binding</keyword>
<keyword id="KW-0511">Multifunctional enzyme</keyword>
<keyword id="KW-0540">Nuclease</keyword>
<keyword id="KW-0548">Nucleotidyltransferase</keyword>
<keyword id="KW-0645">Protease</keyword>
<keyword id="KW-1185">Reference proteome</keyword>
<keyword id="KW-0694">RNA-binding</keyword>
<keyword id="KW-0695">RNA-directed DNA polymerase</keyword>
<keyword id="KW-0808">Transferase</keyword>
<keyword id="KW-0814">Transposable element</keyword>
<feature type="chain" id="PRO_0000097505" description="Transposon Tf2-7 polyprotein">
    <location>
        <begin position="1"/>
        <end position="1333"/>
    </location>
</feature>
<feature type="domain" description="Peptidase A2">
    <location>
        <begin position="266"/>
        <end position="342"/>
    </location>
</feature>
<feature type="domain" description="Reverse transcriptase" evidence="2">
    <location>
        <begin position="436"/>
        <end position="615"/>
    </location>
</feature>
<feature type="domain" description="Integrase catalytic" evidence="3">
    <location>
        <begin position="979"/>
        <end position="1138"/>
    </location>
</feature>
<feature type="region of interest" description="Disordered" evidence="5">
    <location>
        <begin position="199"/>
        <end position="231"/>
    </location>
</feature>
<feature type="compositionally biased region" description="Polar residues" evidence="5">
    <location>
        <begin position="218"/>
        <end position="231"/>
    </location>
</feature>
<feature type="active site" description="For protease activity" evidence="4">
    <location>
        <position position="271"/>
    </location>
</feature>
<feature type="binding site" evidence="1">
    <location>
        <position position="502"/>
    </location>
    <ligand>
        <name>Mg(2+)</name>
        <dbReference type="ChEBI" id="CHEBI:18420"/>
        <label>1</label>
        <note>catalytic; for reverse transcriptase activity</note>
    </ligand>
</feature>
<feature type="binding site" evidence="1">
    <location>
        <position position="566"/>
    </location>
    <ligand>
        <name>Mg(2+)</name>
        <dbReference type="ChEBI" id="CHEBI:18420"/>
        <label>1</label>
        <note>catalytic; for reverse transcriptase activity</note>
    </ligand>
</feature>
<feature type="binding site" evidence="1">
    <location>
        <position position="567"/>
    </location>
    <ligand>
        <name>Mg(2+)</name>
        <dbReference type="ChEBI" id="CHEBI:18420"/>
        <label>1</label>
        <note>catalytic; for reverse transcriptase activity</note>
    </ligand>
</feature>
<feature type="binding site" evidence="1">
    <location>
        <position position="990"/>
    </location>
    <ligand>
        <name>Mg(2+)</name>
        <dbReference type="ChEBI" id="CHEBI:18420"/>
        <label>2</label>
        <note>catalytic; for integrase activity</note>
    </ligand>
</feature>
<feature type="binding site" evidence="1">
    <location>
        <position position="1050"/>
    </location>
    <ligand>
        <name>Mg(2+)</name>
        <dbReference type="ChEBI" id="CHEBI:18420"/>
        <label>2</label>
        <note>catalytic; for integrase activity</note>
    </ligand>
</feature>
<sequence>MSYANYRYMKARAKRWRPENLDGIQTSDEHLINLFAKILSKHVPEIGKFDPNKDVESYISKLDQHFTEYPSLFPNEHTKRQYTLNHLEELEQQFAERMFSENGSLTWQELLRQTGKVQGSNKGDRLTKTFEGFRNQLDKVQFIRKLMSKANVDDFHTRLFILWMLPYSLRKLKERNYWKSEISEIYDFLEDKRTASYGKTHKRFQPQNKNLGKESLSKKNNTTNSRNLRKTNVSRIEYSSNKFLNHTRKRYEMVLQAELPDFKCSIPCLIDTGAQANIITEETVRAHKLPTRPWSKSVIYGGVYPNKINRKTIKLNISLNGISIKTEFLVVKKFSHPAAISFTTLYDNNIEISSSKHTLSQMNKVSNIVKEPELPDIYKEFKDITAETNTEKLPKPIKGLEFEVELTQENYRLPIRNYPLPPGKMQAMNDEINQGLKSGIIRESKAINACPVMFVPKKEGTLRMVVDYKPLNKYVKPNIYPLPLIEQLLAKIQGSTIFTKLDLKSAYHLIRVRKGDEHKLAFRCPRGVFEYLVMPYGISIAPAHFQYFINTILGEVKESHVVCYMDNILIHSKSESEHVKHVKDVLQKLKNANLIINQAKCEFHQSQVKFIGYHISEKGFTPCQENIDKVLQWKQPKNRKELRQFLGSVNYLRKFIPKTSQLTHPLNNLLKKDVRWKWTPTQTQAIENIKQCLVSPPVLRHFDFSKKILLETDASDVAVGAVLSQKHDDDKYYPVGYYSAKMSKAQLNYSVSDKEMLAIIKSLKHWRHYLESTIEPFKILTDHRNLIGRITNESEPENKRLARWQLFLQDFNFEINYRPGSANHIADALSRIVDETEPIPKDSEDNSINFVNQISITDDFKNQVVTEYTNDTKLLNLLNNEDKRVEENIQLKDGLLINSKDQILLPNDTQLTRTIIKKYHEEGKLIHPGIELLTNIILRRFTWKGIRKQIQEYVQNCHTCQINKSRNHKPYGPLQPIPPSERPWESLSMDFITALPESSGYNALFVVVDRFSKMAILVPCTKSITAEQTARMFDQRVIAYFGNPKEIIADNDHIFTSQTWKDFAHKYNFVMKFSLPYRPQTDGQTERTNQTVEKLLRCVCSTHPNTWVDHISLVQQSYNNAIHSATQMTPFEIVHRYSPALSPLELPSFSDKTDENSQETIQVFQTVKEHLNTNNIKMKKYFDMKIQEIEEFQPGDLVMVKRTKTGFLHKSNKLAPSFAGPFYVLQKSGPNNYELDLPDSIKHMFSSTFHVSHLEKYRHNSELNYATIDESDIGTILHILEHKNREQVLYLNVKYISNLNPSTIMSGWTTLATALQADKAIVNDYIKNNNLNI</sequence>
<reference key="1">
    <citation type="journal article" date="2002" name="Nature">
        <title>The genome sequence of Schizosaccharomyces pombe.</title>
        <authorList>
            <person name="Wood V."/>
            <person name="Gwilliam R."/>
            <person name="Rajandream M.A."/>
            <person name="Lyne M.H."/>
            <person name="Lyne R."/>
            <person name="Stewart A."/>
            <person name="Sgouros J.G."/>
            <person name="Peat N."/>
            <person name="Hayles J."/>
            <person name="Baker S.G."/>
            <person name="Basham D."/>
            <person name="Bowman S."/>
            <person name="Brooks K."/>
            <person name="Brown D."/>
            <person name="Brown S."/>
            <person name="Chillingworth T."/>
            <person name="Churcher C.M."/>
            <person name="Collins M."/>
            <person name="Connor R."/>
            <person name="Cronin A."/>
            <person name="Davis P."/>
            <person name="Feltwell T."/>
            <person name="Fraser A."/>
            <person name="Gentles S."/>
            <person name="Goble A."/>
            <person name="Hamlin N."/>
            <person name="Harris D.E."/>
            <person name="Hidalgo J."/>
            <person name="Hodgson G."/>
            <person name="Holroyd S."/>
            <person name="Hornsby T."/>
            <person name="Howarth S."/>
            <person name="Huckle E.J."/>
            <person name="Hunt S."/>
            <person name="Jagels K."/>
            <person name="James K.D."/>
            <person name="Jones L."/>
            <person name="Jones M."/>
            <person name="Leather S."/>
            <person name="McDonald S."/>
            <person name="McLean J."/>
            <person name="Mooney P."/>
            <person name="Moule S."/>
            <person name="Mungall K.L."/>
            <person name="Murphy L.D."/>
            <person name="Niblett D."/>
            <person name="Odell C."/>
            <person name="Oliver K."/>
            <person name="O'Neil S."/>
            <person name="Pearson D."/>
            <person name="Quail M.A."/>
            <person name="Rabbinowitsch E."/>
            <person name="Rutherford K.M."/>
            <person name="Rutter S."/>
            <person name="Saunders D."/>
            <person name="Seeger K."/>
            <person name="Sharp S."/>
            <person name="Skelton J."/>
            <person name="Simmonds M.N."/>
            <person name="Squares R."/>
            <person name="Squares S."/>
            <person name="Stevens K."/>
            <person name="Taylor K."/>
            <person name="Taylor R.G."/>
            <person name="Tivey A."/>
            <person name="Walsh S.V."/>
            <person name="Warren T."/>
            <person name="Whitehead S."/>
            <person name="Woodward J.R."/>
            <person name="Volckaert G."/>
            <person name="Aert R."/>
            <person name="Robben J."/>
            <person name="Grymonprez B."/>
            <person name="Weltjens I."/>
            <person name="Vanstreels E."/>
            <person name="Rieger M."/>
            <person name="Schaefer M."/>
            <person name="Mueller-Auer S."/>
            <person name="Gabel C."/>
            <person name="Fuchs M."/>
            <person name="Duesterhoeft A."/>
            <person name="Fritzc C."/>
            <person name="Holzer E."/>
            <person name="Moestl D."/>
            <person name="Hilbert H."/>
            <person name="Borzym K."/>
            <person name="Langer I."/>
            <person name="Beck A."/>
            <person name="Lehrach H."/>
            <person name="Reinhardt R."/>
            <person name="Pohl T.M."/>
            <person name="Eger P."/>
            <person name="Zimmermann W."/>
            <person name="Wedler H."/>
            <person name="Wambutt R."/>
            <person name="Purnelle B."/>
            <person name="Goffeau A."/>
            <person name="Cadieu E."/>
            <person name="Dreano S."/>
            <person name="Gloux S."/>
            <person name="Lelaure V."/>
            <person name="Mottier S."/>
            <person name="Galibert F."/>
            <person name="Aves S.J."/>
            <person name="Xiang Z."/>
            <person name="Hunt C."/>
            <person name="Moore K."/>
            <person name="Hurst S.M."/>
            <person name="Lucas M."/>
            <person name="Rochet M."/>
            <person name="Gaillardin C."/>
            <person name="Tallada V.A."/>
            <person name="Garzon A."/>
            <person name="Thode G."/>
            <person name="Daga R.R."/>
            <person name="Cruzado L."/>
            <person name="Jimenez J."/>
            <person name="Sanchez M."/>
            <person name="del Rey F."/>
            <person name="Benito J."/>
            <person name="Dominguez A."/>
            <person name="Revuelta J.L."/>
            <person name="Moreno S."/>
            <person name="Armstrong J."/>
            <person name="Forsburg S.L."/>
            <person name="Cerutti L."/>
            <person name="Lowe T."/>
            <person name="McCombie W.R."/>
            <person name="Paulsen I."/>
            <person name="Potashkin J."/>
            <person name="Shpakovski G.V."/>
            <person name="Ussery D."/>
            <person name="Barrell B.G."/>
            <person name="Nurse P."/>
        </authorList>
    </citation>
    <scope>NUCLEOTIDE SEQUENCE [LARGE SCALE GENOMIC DNA]</scope>
    <source>
        <strain>972 / ATCC 24843</strain>
    </source>
</reference>
<reference key="2">
    <citation type="journal article" date="2003" name="Genome Res.">
        <title>Retrotransposons and their recognition of pol II promoters: a comprehensive survey of the transposable elements from the complete genome sequence of Schizosaccharomyces pombe.</title>
        <authorList>
            <person name="Bowen N.J."/>
            <person name="Jordan I.K."/>
            <person name="Epstein J.A."/>
            <person name="Wood V."/>
            <person name="Levin H.L."/>
        </authorList>
    </citation>
    <scope>NOMENCLATURE</scope>
</reference>
<dbReference type="EMBL" id="CU329670">
    <property type="protein sequence ID" value="CAC37430.1"/>
    <property type="molecule type" value="Genomic_DNA"/>
</dbReference>
<dbReference type="RefSeq" id="NP_594897.1">
    <property type="nucleotide sequence ID" value="NM_001020326.2"/>
</dbReference>
<dbReference type="SMR" id="P0CT42"/>
<dbReference type="FunCoup" id="P0CT42">
    <property type="interactions" value="2"/>
</dbReference>
<dbReference type="STRING" id="284812.P0CT42"/>
<dbReference type="MEROPS" id="A02.051"/>
<dbReference type="PaxDb" id="4896-SPAC13D1.01c.1"/>
<dbReference type="EnsemblFungi" id="SPAC13D1.01c.1">
    <property type="protein sequence ID" value="SPAC13D1.01c.1:pep"/>
    <property type="gene ID" value="SPAC13D1.01c"/>
</dbReference>
<dbReference type="EnsemblFungi" id="SPAC19D5.09c.1">
    <property type="protein sequence ID" value="SPAC19D5.09c.1:pep"/>
    <property type="gene ID" value="SPAC19D5.09c"/>
</dbReference>
<dbReference type="GeneID" id="2542763"/>
<dbReference type="KEGG" id="spo:2542763"/>
<dbReference type="KEGG" id="spo:2542903"/>
<dbReference type="PomBase" id="SPAC13D1.01c">
    <property type="gene designation" value="Tf2-7"/>
</dbReference>
<dbReference type="VEuPathDB" id="FungiDB:SPAC13D1.01c"/>
<dbReference type="VEuPathDB" id="FungiDB:SPAC19D5.09c"/>
<dbReference type="eggNOG" id="KOG0017">
    <property type="taxonomic scope" value="Eukaryota"/>
</dbReference>
<dbReference type="HOGENOM" id="CLU_000384_4_0_1"/>
<dbReference type="InParanoid" id="P0CT42"/>
<dbReference type="OMA" id="ERNCDEM"/>
<dbReference type="PhylomeDB" id="P0CT42"/>
<dbReference type="PRO" id="PR:P0CT42"/>
<dbReference type="Proteomes" id="UP000002485">
    <property type="component" value="Chromosome I"/>
</dbReference>
<dbReference type="GO" id="GO:0005634">
    <property type="term" value="C:nucleus"/>
    <property type="evidence" value="ECO:0007669"/>
    <property type="project" value="UniProtKB-ARBA"/>
</dbReference>
<dbReference type="GO" id="GO:0004190">
    <property type="term" value="F:aspartic-type endopeptidase activity"/>
    <property type="evidence" value="ECO:0007669"/>
    <property type="project" value="UniProtKB-KW"/>
</dbReference>
<dbReference type="GO" id="GO:0003677">
    <property type="term" value="F:DNA binding"/>
    <property type="evidence" value="ECO:0007669"/>
    <property type="project" value="UniProtKB-KW"/>
</dbReference>
<dbReference type="GO" id="GO:0003887">
    <property type="term" value="F:DNA-directed DNA polymerase activity"/>
    <property type="evidence" value="ECO:0007669"/>
    <property type="project" value="UniProtKB-KW"/>
</dbReference>
<dbReference type="GO" id="GO:0004519">
    <property type="term" value="F:endonuclease activity"/>
    <property type="evidence" value="ECO:0007669"/>
    <property type="project" value="UniProtKB-KW"/>
</dbReference>
<dbReference type="GO" id="GO:0046872">
    <property type="term" value="F:metal ion binding"/>
    <property type="evidence" value="ECO:0007669"/>
    <property type="project" value="UniProtKB-KW"/>
</dbReference>
<dbReference type="GO" id="GO:0003723">
    <property type="term" value="F:RNA binding"/>
    <property type="evidence" value="ECO:0007669"/>
    <property type="project" value="UniProtKB-KW"/>
</dbReference>
<dbReference type="GO" id="GO:0003964">
    <property type="term" value="F:RNA-directed DNA polymerase activity"/>
    <property type="evidence" value="ECO:0007669"/>
    <property type="project" value="UniProtKB-KW"/>
</dbReference>
<dbReference type="GO" id="GO:0015074">
    <property type="term" value="P:DNA integration"/>
    <property type="evidence" value="ECO:0007669"/>
    <property type="project" value="UniProtKB-KW"/>
</dbReference>
<dbReference type="GO" id="GO:0006310">
    <property type="term" value="P:DNA recombination"/>
    <property type="evidence" value="ECO:0007669"/>
    <property type="project" value="UniProtKB-KW"/>
</dbReference>
<dbReference type="GO" id="GO:0006508">
    <property type="term" value="P:proteolysis"/>
    <property type="evidence" value="ECO:0007669"/>
    <property type="project" value="UniProtKB-KW"/>
</dbReference>
<dbReference type="CDD" id="cd00303">
    <property type="entry name" value="retropepsin_like"/>
    <property type="match status" value="1"/>
</dbReference>
<dbReference type="CDD" id="cd09274">
    <property type="entry name" value="RNase_HI_RT_Ty3"/>
    <property type="match status" value="1"/>
</dbReference>
<dbReference type="CDD" id="cd01647">
    <property type="entry name" value="RT_LTR"/>
    <property type="match status" value="1"/>
</dbReference>
<dbReference type="FunFam" id="3.10.20.370:FF:000003">
    <property type="entry name" value="Transposon Tf2-6 polyprotein"/>
    <property type="match status" value="1"/>
</dbReference>
<dbReference type="FunFam" id="3.30.70.270:FF:000045">
    <property type="entry name" value="Transposon Tf2-7 polyprotein"/>
    <property type="match status" value="1"/>
</dbReference>
<dbReference type="Gene3D" id="1.10.340.70">
    <property type="match status" value="1"/>
</dbReference>
<dbReference type="Gene3D" id="3.10.20.370">
    <property type="match status" value="1"/>
</dbReference>
<dbReference type="Gene3D" id="3.30.70.270">
    <property type="match status" value="2"/>
</dbReference>
<dbReference type="Gene3D" id="2.40.70.10">
    <property type="entry name" value="Acid Proteases"/>
    <property type="match status" value="1"/>
</dbReference>
<dbReference type="Gene3D" id="3.10.10.10">
    <property type="entry name" value="HIV Type 1 Reverse Transcriptase, subunit A, domain 1"/>
    <property type="match status" value="1"/>
</dbReference>
<dbReference type="Gene3D" id="3.30.420.10">
    <property type="entry name" value="Ribonuclease H-like superfamily/Ribonuclease H"/>
    <property type="match status" value="1"/>
</dbReference>
<dbReference type="InterPro" id="IPR001969">
    <property type="entry name" value="Aspartic_peptidase_AS"/>
</dbReference>
<dbReference type="InterPro" id="IPR043502">
    <property type="entry name" value="DNA/RNA_pol_sf"/>
</dbReference>
<dbReference type="InterPro" id="IPR001584">
    <property type="entry name" value="Integrase_cat-core"/>
</dbReference>
<dbReference type="InterPro" id="IPR041588">
    <property type="entry name" value="Integrase_H2C2"/>
</dbReference>
<dbReference type="InterPro" id="IPR021109">
    <property type="entry name" value="Peptidase_aspartic_dom_sf"/>
</dbReference>
<dbReference type="InterPro" id="IPR050951">
    <property type="entry name" value="Retrovirus_Pol_polyprotein"/>
</dbReference>
<dbReference type="InterPro" id="IPR043128">
    <property type="entry name" value="Rev_trsase/Diguanyl_cyclase"/>
</dbReference>
<dbReference type="InterPro" id="IPR012337">
    <property type="entry name" value="RNaseH-like_sf"/>
</dbReference>
<dbReference type="InterPro" id="IPR036397">
    <property type="entry name" value="RNaseH_sf"/>
</dbReference>
<dbReference type="InterPro" id="IPR000477">
    <property type="entry name" value="RT_dom"/>
</dbReference>
<dbReference type="InterPro" id="IPR041577">
    <property type="entry name" value="RT_RNaseH_2"/>
</dbReference>
<dbReference type="InterPro" id="IPR056924">
    <property type="entry name" value="SH3_Tf2-1"/>
</dbReference>
<dbReference type="InterPro" id="IPR056930">
    <property type="entry name" value="Tf2-1-like_C"/>
</dbReference>
<dbReference type="InterPro" id="IPR024648">
    <property type="entry name" value="Tf2-1-like_dom"/>
</dbReference>
<dbReference type="PANTHER" id="PTHR37984">
    <property type="entry name" value="PROTEIN CBG26694"/>
    <property type="match status" value="1"/>
</dbReference>
<dbReference type="PANTHER" id="PTHR37984:SF5">
    <property type="entry name" value="PROTEIN NYNRIN-LIKE"/>
    <property type="match status" value="1"/>
</dbReference>
<dbReference type="Pfam" id="PF17921">
    <property type="entry name" value="Integrase_H2C2"/>
    <property type="match status" value="1"/>
</dbReference>
<dbReference type="Pfam" id="PF12382">
    <property type="entry name" value="Peptidase_A2_2"/>
    <property type="match status" value="1"/>
</dbReference>
<dbReference type="Pfam" id="PF17919">
    <property type="entry name" value="RT_RNaseH_2"/>
    <property type="match status" value="1"/>
</dbReference>
<dbReference type="Pfam" id="PF00665">
    <property type="entry name" value="rve"/>
    <property type="match status" value="1"/>
</dbReference>
<dbReference type="Pfam" id="PF00078">
    <property type="entry name" value="RVT_1"/>
    <property type="match status" value="1"/>
</dbReference>
<dbReference type="Pfam" id="PF24626">
    <property type="entry name" value="SH3_Tf2-1"/>
    <property type="match status" value="1"/>
</dbReference>
<dbReference type="Pfam" id="PF24614">
    <property type="entry name" value="Tf2-1_C"/>
    <property type="match status" value="1"/>
</dbReference>
<dbReference type="SUPFAM" id="SSF50630">
    <property type="entry name" value="Acid proteases"/>
    <property type="match status" value="1"/>
</dbReference>
<dbReference type="SUPFAM" id="SSF56672">
    <property type="entry name" value="DNA/RNA polymerases"/>
    <property type="match status" value="1"/>
</dbReference>
<dbReference type="SUPFAM" id="SSF53098">
    <property type="entry name" value="Ribonuclease H-like"/>
    <property type="match status" value="1"/>
</dbReference>
<dbReference type="PROSITE" id="PS00141">
    <property type="entry name" value="ASP_PROTEASE"/>
    <property type="match status" value="1"/>
</dbReference>
<dbReference type="PROSITE" id="PS50994">
    <property type="entry name" value="INTEGRASE"/>
    <property type="match status" value="1"/>
</dbReference>
<dbReference type="PROSITE" id="PS50878">
    <property type="entry name" value="RT_POL"/>
    <property type="match status" value="1"/>
</dbReference>
<gene>
    <name type="primary">Tf2-7</name>
    <name type="ORF">SPAC13D1.01c</name>
</gene>
<evidence type="ECO:0000250" key="1"/>
<evidence type="ECO:0000255" key="2">
    <source>
        <dbReference type="PROSITE-ProRule" id="PRU00405"/>
    </source>
</evidence>
<evidence type="ECO:0000255" key="3">
    <source>
        <dbReference type="PROSITE-ProRule" id="PRU00457"/>
    </source>
</evidence>
<evidence type="ECO:0000255" key="4">
    <source>
        <dbReference type="PROSITE-ProRule" id="PRU10094"/>
    </source>
</evidence>
<evidence type="ECO:0000256" key="5">
    <source>
        <dbReference type="SAM" id="MobiDB-lite"/>
    </source>
</evidence>
<comment type="PTM">
    <text evidence="1">Processing of the polyproteins proceeds by an ordered pathway, called maturation. It involves the initial cleavage of a 27 kDa capsid protein (CA) from the N-terminus of the polyprotein, followed by the cleavage of a 56 kDa integrase (IN) from the C-terminus. This leaves a 72 kDa protease-reverse transcriptase fusion protein (PR-RT), which does not seem to be processed further (By similarity).</text>
</comment>
<comment type="miscellaneous">
    <text>Retrotransposons are mobile genetic entities that are able to replicate via an RNA intermediate and a reverse transcription step. In contrast to retroviruses, retrotransposons are non-infectious, lack an envelope and remain intracellular. Tf2 retrotransposons belong to the gypsy-like elements (metaviridae).</text>
</comment>
<protein>
    <recommendedName>
        <fullName>Transposon Tf2-7 polyprotein</fullName>
    </recommendedName>
    <alternativeName>
        <fullName>Retrotransposable element Tf2 155 kDa protein</fullName>
    </alternativeName>
</protein>
<organism>
    <name type="scientific">Schizosaccharomyces pombe (strain 972 / ATCC 24843)</name>
    <name type="common">Fission yeast</name>
    <dbReference type="NCBI Taxonomy" id="284812"/>
    <lineage>
        <taxon>Eukaryota</taxon>
        <taxon>Fungi</taxon>
        <taxon>Dikarya</taxon>
        <taxon>Ascomycota</taxon>
        <taxon>Taphrinomycotina</taxon>
        <taxon>Schizosaccharomycetes</taxon>
        <taxon>Schizosaccharomycetales</taxon>
        <taxon>Schizosaccharomycetaceae</taxon>
        <taxon>Schizosaccharomyces</taxon>
    </lineage>
</organism>
<name>TF27_SCHPO</name>